<accession>Q9UVL1</accession>
<accession>A0A1D8PLB9</accession>
<protein>
    <recommendedName>
        <fullName>Non-histone chromosomal protein 6</fullName>
    </recommendedName>
</protein>
<organism>
    <name type="scientific">Candida albicans (strain SC5314 / ATCC MYA-2876)</name>
    <name type="common">Yeast</name>
    <dbReference type="NCBI Taxonomy" id="237561"/>
    <lineage>
        <taxon>Eukaryota</taxon>
        <taxon>Fungi</taxon>
        <taxon>Dikarya</taxon>
        <taxon>Ascomycota</taxon>
        <taxon>Saccharomycotina</taxon>
        <taxon>Pichiomycetes</taxon>
        <taxon>Debaryomycetaceae</taxon>
        <taxon>Candida/Lodderomyces clade</taxon>
        <taxon>Candida</taxon>
    </lineage>
</organism>
<gene>
    <name type="primary">NHP6</name>
    <name type="synonym">NHP6A</name>
    <name type="ordered locus">CAALFM_C401700CA</name>
    <name type="ORF">CaO19.12093.3</name>
    <name type="ORF">CaO19.4623.3</name>
</gene>
<comment type="function">
    <text evidence="1">DNA-binding protein that induces severe bending of DNA. Required for DNA-binding by the FACT complex, a general chromatin factor that acts to reorganize nucleosomes. The FACT complex is involved in multiple processes that require DNA as a template such as mRNA elongation, DNA replication and DNA repair. Also augments the fidelity of transcription by RNA polymerase III independently of any role in the FACT complex (By similarity).</text>
</comment>
<comment type="subunit">
    <text evidence="1">Weakly associates with the stable SPT16-POB3 heterodimer to form the FACT complex.</text>
</comment>
<comment type="subcellular location">
    <subcellularLocation>
        <location evidence="2">Nucleus</location>
    </subcellularLocation>
    <subcellularLocation>
        <location evidence="1">Chromosome</location>
    </subcellularLocation>
</comment>
<comment type="similarity">
    <text evidence="4">Belongs to the NHP6 family.</text>
</comment>
<proteinExistence type="inferred from homology"/>
<sequence>MAPGERKKSSRKKKDPDAPKRSLSAYMFFANENRDIVRAENPGISFGQVGKLLGEKWKALNSEDKLPYENKAEADKKRYEKEKAEYAKKNSA</sequence>
<name>NHP6_CANAL</name>
<feature type="chain" id="PRO_0000245215" description="Non-histone chromosomal protein 6">
    <location>
        <begin position="1"/>
        <end position="92"/>
    </location>
</feature>
<feature type="DNA-binding region" description="HMG box" evidence="2">
    <location>
        <begin position="19"/>
        <end position="87"/>
    </location>
</feature>
<feature type="region of interest" description="Disordered" evidence="3">
    <location>
        <begin position="1"/>
        <end position="22"/>
    </location>
</feature>
<feature type="region of interest" description="Disordered" evidence="3">
    <location>
        <begin position="64"/>
        <end position="92"/>
    </location>
</feature>
<evidence type="ECO:0000250" key="1"/>
<evidence type="ECO:0000255" key="2">
    <source>
        <dbReference type="PROSITE-ProRule" id="PRU00267"/>
    </source>
</evidence>
<evidence type="ECO:0000256" key="3">
    <source>
        <dbReference type="SAM" id="MobiDB-lite"/>
    </source>
</evidence>
<evidence type="ECO:0000305" key="4"/>
<dbReference type="EMBL" id="AF196333">
    <property type="protein sequence ID" value="AAF06350.1"/>
    <property type="molecule type" value="mRNA"/>
</dbReference>
<dbReference type="EMBL" id="CP017626">
    <property type="protein sequence ID" value="AOW28942.1"/>
    <property type="molecule type" value="Genomic_DNA"/>
</dbReference>
<dbReference type="RefSeq" id="XP_019330907.1">
    <property type="nucleotide sequence ID" value="XM_019475362.1"/>
</dbReference>
<dbReference type="SMR" id="Q9UVL1"/>
<dbReference type="FunCoup" id="Q9UVL1">
    <property type="interactions" value="458"/>
</dbReference>
<dbReference type="STRING" id="237561.Q9UVL1"/>
<dbReference type="EnsemblFungi" id="C4_01700C_A-T">
    <property type="protein sequence ID" value="C4_01700C_A-T-p1"/>
    <property type="gene ID" value="C4_01700C_A"/>
</dbReference>
<dbReference type="GeneID" id="30515244"/>
<dbReference type="KEGG" id="cal:CAALFM_C401700CA"/>
<dbReference type="CGD" id="CAL0000201490">
    <property type="gene designation" value="NHP6A"/>
</dbReference>
<dbReference type="VEuPathDB" id="FungiDB:C4_01700C_A"/>
<dbReference type="eggNOG" id="KOG0381">
    <property type="taxonomic scope" value="Eukaryota"/>
</dbReference>
<dbReference type="InParanoid" id="Q9UVL1"/>
<dbReference type="OMA" id="MKNMGGK"/>
<dbReference type="OrthoDB" id="1919336at2759"/>
<dbReference type="Proteomes" id="UP000000559">
    <property type="component" value="Chromosome 4"/>
</dbReference>
<dbReference type="GO" id="GO:0005694">
    <property type="term" value="C:chromosome"/>
    <property type="evidence" value="ECO:0007669"/>
    <property type="project" value="UniProtKB-SubCell"/>
</dbReference>
<dbReference type="GO" id="GO:0005634">
    <property type="term" value="C:nucleus"/>
    <property type="evidence" value="ECO:0007669"/>
    <property type="project" value="UniProtKB-SubCell"/>
</dbReference>
<dbReference type="GO" id="GO:0003677">
    <property type="term" value="F:DNA binding"/>
    <property type="evidence" value="ECO:0000314"/>
    <property type="project" value="CGD"/>
</dbReference>
<dbReference type="GO" id="GO:0006281">
    <property type="term" value="P:DNA repair"/>
    <property type="evidence" value="ECO:0007669"/>
    <property type="project" value="UniProtKB-KW"/>
</dbReference>
<dbReference type="CDD" id="cd01390">
    <property type="entry name" value="HMG-box_NHP6-like"/>
    <property type="match status" value="1"/>
</dbReference>
<dbReference type="FunFam" id="1.10.30.10:FF:000016">
    <property type="entry name" value="FACT complex subunit SSRP1"/>
    <property type="match status" value="1"/>
</dbReference>
<dbReference type="Gene3D" id="1.10.30.10">
    <property type="entry name" value="High mobility group box domain"/>
    <property type="match status" value="1"/>
</dbReference>
<dbReference type="InterPro" id="IPR009071">
    <property type="entry name" value="HMG_box_dom"/>
</dbReference>
<dbReference type="InterPro" id="IPR036910">
    <property type="entry name" value="HMG_box_dom_sf"/>
</dbReference>
<dbReference type="InterPro" id="IPR050342">
    <property type="entry name" value="HMGB"/>
</dbReference>
<dbReference type="PANTHER" id="PTHR48112">
    <property type="entry name" value="HIGH MOBILITY GROUP PROTEIN DSP1"/>
    <property type="match status" value="1"/>
</dbReference>
<dbReference type="PANTHER" id="PTHR48112:SF22">
    <property type="entry name" value="MITOCHONDRIAL TRANSCRIPTION FACTOR A, ISOFORM B"/>
    <property type="match status" value="1"/>
</dbReference>
<dbReference type="Pfam" id="PF00505">
    <property type="entry name" value="HMG_box"/>
    <property type="match status" value="1"/>
</dbReference>
<dbReference type="PRINTS" id="PR00886">
    <property type="entry name" value="HIGHMOBLTY12"/>
</dbReference>
<dbReference type="SMART" id="SM00398">
    <property type="entry name" value="HMG"/>
    <property type="match status" value="1"/>
</dbReference>
<dbReference type="SUPFAM" id="SSF47095">
    <property type="entry name" value="HMG-box"/>
    <property type="match status" value="1"/>
</dbReference>
<dbReference type="PROSITE" id="PS50118">
    <property type="entry name" value="HMG_BOX_2"/>
    <property type="match status" value="1"/>
</dbReference>
<reference key="1">
    <citation type="submission" date="1999-10" db="EMBL/GenBank/DDBJ databases">
        <title>CaNHP6 encodes a high mobility group (HMG)-like protein that influences cell and colony morphology in Candida albicans.</title>
        <authorList>
            <person name="Harris S."/>
            <person name="Wiltshire C."/>
            <person name="Wilson S."/>
            <person name="Schmitt A."/>
            <person name="Spaltmann F."/>
            <person name="Gooday G.W."/>
            <person name="Gow N.A.R."/>
            <person name="Brown A.J.P."/>
        </authorList>
    </citation>
    <scope>NUCLEOTIDE SEQUENCE [MRNA]</scope>
    <source>
        <strain>3153A</strain>
    </source>
</reference>
<reference key="2">
    <citation type="journal article" date="2004" name="Proc. Natl. Acad. Sci. U.S.A.">
        <title>The diploid genome sequence of Candida albicans.</title>
        <authorList>
            <person name="Jones T."/>
            <person name="Federspiel N.A."/>
            <person name="Chibana H."/>
            <person name="Dungan J."/>
            <person name="Kalman S."/>
            <person name="Magee B.B."/>
            <person name="Newport G."/>
            <person name="Thorstenson Y.R."/>
            <person name="Agabian N."/>
            <person name="Magee P.T."/>
            <person name="Davis R.W."/>
            <person name="Scherer S."/>
        </authorList>
    </citation>
    <scope>NUCLEOTIDE SEQUENCE [LARGE SCALE GENOMIC DNA]</scope>
    <source>
        <strain>SC5314 / ATCC MYA-2876</strain>
    </source>
</reference>
<reference key="3">
    <citation type="journal article" date="2007" name="Genome Biol.">
        <title>Assembly of the Candida albicans genome into sixteen supercontigs aligned on the eight chromosomes.</title>
        <authorList>
            <person name="van het Hoog M."/>
            <person name="Rast T.J."/>
            <person name="Martchenko M."/>
            <person name="Grindle S."/>
            <person name="Dignard D."/>
            <person name="Hogues H."/>
            <person name="Cuomo C."/>
            <person name="Berriman M."/>
            <person name="Scherer S."/>
            <person name="Magee B.B."/>
            <person name="Whiteway M."/>
            <person name="Chibana H."/>
            <person name="Nantel A."/>
            <person name="Magee P.T."/>
        </authorList>
    </citation>
    <scope>GENOME REANNOTATION</scope>
    <source>
        <strain>SC5314 / ATCC MYA-2876</strain>
    </source>
</reference>
<reference key="4">
    <citation type="journal article" date="2013" name="Genome Biol.">
        <title>Assembly of a phased diploid Candida albicans genome facilitates allele-specific measurements and provides a simple model for repeat and indel structure.</title>
        <authorList>
            <person name="Muzzey D."/>
            <person name="Schwartz K."/>
            <person name="Weissman J.S."/>
            <person name="Sherlock G."/>
        </authorList>
    </citation>
    <scope>NUCLEOTIDE SEQUENCE [LARGE SCALE GENOMIC DNA]</scope>
    <scope>GENOME REANNOTATION</scope>
    <source>
        <strain>SC5314 / ATCC MYA-2876</strain>
    </source>
</reference>
<keyword id="KW-0158">Chromosome</keyword>
<keyword id="KW-0227">DNA damage</keyword>
<keyword id="KW-0234">DNA repair</keyword>
<keyword id="KW-0238">DNA-binding</keyword>
<keyword id="KW-0539">Nucleus</keyword>
<keyword id="KW-1185">Reference proteome</keyword>
<keyword id="KW-0804">Transcription</keyword>
<keyword id="KW-0805">Transcription regulation</keyword>